<reference key="1">
    <citation type="journal article" date="2002" name="Nature">
        <title>The genome sequence of Schizosaccharomyces pombe.</title>
        <authorList>
            <person name="Wood V."/>
            <person name="Gwilliam R."/>
            <person name="Rajandream M.A."/>
            <person name="Lyne M.H."/>
            <person name="Lyne R."/>
            <person name="Stewart A."/>
            <person name="Sgouros J.G."/>
            <person name="Peat N."/>
            <person name="Hayles J."/>
            <person name="Baker S.G."/>
            <person name="Basham D."/>
            <person name="Bowman S."/>
            <person name="Brooks K."/>
            <person name="Brown D."/>
            <person name="Brown S."/>
            <person name="Chillingworth T."/>
            <person name="Churcher C.M."/>
            <person name="Collins M."/>
            <person name="Connor R."/>
            <person name="Cronin A."/>
            <person name="Davis P."/>
            <person name="Feltwell T."/>
            <person name="Fraser A."/>
            <person name="Gentles S."/>
            <person name="Goble A."/>
            <person name="Hamlin N."/>
            <person name="Harris D.E."/>
            <person name="Hidalgo J."/>
            <person name="Hodgson G."/>
            <person name="Holroyd S."/>
            <person name="Hornsby T."/>
            <person name="Howarth S."/>
            <person name="Huckle E.J."/>
            <person name="Hunt S."/>
            <person name="Jagels K."/>
            <person name="James K.D."/>
            <person name="Jones L."/>
            <person name="Jones M."/>
            <person name="Leather S."/>
            <person name="McDonald S."/>
            <person name="McLean J."/>
            <person name="Mooney P."/>
            <person name="Moule S."/>
            <person name="Mungall K.L."/>
            <person name="Murphy L.D."/>
            <person name="Niblett D."/>
            <person name="Odell C."/>
            <person name="Oliver K."/>
            <person name="O'Neil S."/>
            <person name="Pearson D."/>
            <person name="Quail M.A."/>
            <person name="Rabbinowitsch E."/>
            <person name="Rutherford K.M."/>
            <person name="Rutter S."/>
            <person name="Saunders D."/>
            <person name="Seeger K."/>
            <person name="Sharp S."/>
            <person name="Skelton J."/>
            <person name="Simmonds M.N."/>
            <person name="Squares R."/>
            <person name="Squares S."/>
            <person name="Stevens K."/>
            <person name="Taylor K."/>
            <person name="Taylor R.G."/>
            <person name="Tivey A."/>
            <person name="Walsh S.V."/>
            <person name="Warren T."/>
            <person name="Whitehead S."/>
            <person name="Woodward J.R."/>
            <person name="Volckaert G."/>
            <person name="Aert R."/>
            <person name="Robben J."/>
            <person name="Grymonprez B."/>
            <person name="Weltjens I."/>
            <person name="Vanstreels E."/>
            <person name="Rieger M."/>
            <person name="Schaefer M."/>
            <person name="Mueller-Auer S."/>
            <person name="Gabel C."/>
            <person name="Fuchs M."/>
            <person name="Duesterhoeft A."/>
            <person name="Fritzc C."/>
            <person name="Holzer E."/>
            <person name="Moestl D."/>
            <person name="Hilbert H."/>
            <person name="Borzym K."/>
            <person name="Langer I."/>
            <person name="Beck A."/>
            <person name="Lehrach H."/>
            <person name="Reinhardt R."/>
            <person name="Pohl T.M."/>
            <person name="Eger P."/>
            <person name="Zimmermann W."/>
            <person name="Wedler H."/>
            <person name="Wambutt R."/>
            <person name="Purnelle B."/>
            <person name="Goffeau A."/>
            <person name="Cadieu E."/>
            <person name="Dreano S."/>
            <person name="Gloux S."/>
            <person name="Lelaure V."/>
            <person name="Mottier S."/>
            <person name="Galibert F."/>
            <person name="Aves S.J."/>
            <person name="Xiang Z."/>
            <person name="Hunt C."/>
            <person name="Moore K."/>
            <person name="Hurst S.M."/>
            <person name="Lucas M."/>
            <person name="Rochet M."/>
            <person name="Gaillardin C."/>
            <person name="Tallada V.A."/>
            <person name="Garzon A."/>
            <person name="Thode G."/>
            <person name="Daga R.R."/>
            <person name="Cruzado L."/>
            <person name="Jimenez J."/>
            <person name="Sanchez M."/>
            <person name="del Rey F."/>
            <person name="Benito J."/>
            <person name="Dominguez A."/>
            <person name="Revuelta J.L."/>
            <person name="Moreno S."/>
            <person name="Armstrong J."/>
            <person name="Forsburg S.L."/>
            <person name="Cerutti L."/>
            <person name="Lowe T."/>
            <person name="McCombie W.R."/>
            <person name="Paulsen I."/>
            <person name="Potashkin J."/>
            <person name="Shpakovski G.V."/>
            <person name="Ussery D."/>
            <person name="Barrell B.G."/>
            <person name="Nurse P."/>
        </authorList>
    </citation>
    <scope>NUCLEOTIDE SEQUENCE [LARGE SCALE GENOMIC DNA]</scope>
    <source>
        <strain>972 / ATCC 24843</strain>
    </source>
</reference>
<gene>
    <name type="primary">str3</name>
    <name type="ORF">SPCC11E10.01</name>
    <name type="ORF">SPCC61.06</name>
</gene>
<organism>
    <name type="scientific">Schizosaccharomyces pombe (strain 972 / ATCC 24843)</name>
    <name type="common">Fission yeast</name>
    <dbReference type="NCBI Taxonomy" id="284812"/>
    <lineage>
        <taxon>Eukaryota</taxon>
        <taxon>Fungi</taxon>
        <taxon>Dikarya</taxon>
        <taxon>Ascomycota</taxon>
        <taxon>Taphrinomycotina</taxon>
        <taxon>Schizosaccharomycetes</taxon>
        <taxon>Schizosaccharomycetales</taxon>
        <taxon>Schizosaccharomycetaceae</taxon>
        <taxon>Schizosaccharomyces</taxon>
    </lineage>
</organism>
<sequence>MPSDCKYSVDTELVHVEGNEDQYHASSVPIYQSATFKQPCLEHMGKFDYTRSGNPTRSVLQVHLAKLMKAKHAFVTSNGMSALDMILRCCKSNSHVVAGHDLYGGSDRLLSFNQRQYGFKVDNVDTSDLAAFEAALRPDTNLVLIESPTNPRISICDIRAIVKITRSKAKDALLVMDNTMLSPVLCNPLDFGYDIVYESATKYLSGHHDLMGGVIATKSDEIAKSVFFNINAMGAAMAPFECFLLLRGIKTMGLRVERAQQNAIEIAKFLKSKGLQVNFPGLDPDAKSTAIFYSFARGPGAVMSVFTGDVEVSKTIVNTTKLFEISVSFGAVNSLISMPAYMSHASIKKEVRDARGLSEDLIRICVGIENVDDLKADLENALAQANFKQN</sequence>
<keyword id="KW-0028">Amino-acid biosynthesis</keyword>
<keyword id="KW-0963">Cytoplasm</keyword>
<keyword id="KW-0456">Lyase</keyword>
<keyword id="KW-0486">Methionine biosynthesis</keyword>
<keyword id="KW-0539">Nucleus</keyword>
<keyword id="KW-0663">Pyridoxal phosphate</keyword>
<keyword id="KW-1185">Reference proteome</keyword>
<feature type="chain" id="PRO_0000352810" description="Cystathionine beta-lyase">
    <location>
        <begin position="1"/>
        <end position="390"/>
    </location>
</feature>
<feature type="modified residue" description="N6-(pyridoxal phosphate)lysine" evidence="1">
    <location>
        <position position="202"/>
    </location>
</feature>
<protein>
    <recommendedName>
        <fullName>Cystathionine beta-lyase</fullName>
        <shortName>CBL</shortName>
        <ecNumber>4.4.1.13</ecNumber>
    </recommendedName>
    <alternativeName>
        <fullName>Beta-cystathionase</fullName>
    </alternativeName>
    <alternativeName>
        <fullName>Cysteine lyase</fullName>
    </alternativeName>
    <alternativeName>
        <fullName>Cysteine-S-conjugate beta-lyase</fullName>
    </alternativeName>
</protein>
<dbReference type="EC" id="4.4.1.13"/>
<dbReference type="EMBL" id="CU329672">
    <property type="protein sequence ID" value="CAA22275.2"/>
    <property type="molecule type" value="Genomic_DNA"/>
</dbReference>
<dbReference type="RefSeq" id="NP_588197.2">
    <property type="nucleotide sequence ID" value="NM_001023187.2"/>
</dbReference>
<dbReference type="SMR" id="O94350"/>
<dbReference type="BioGRID" id="275592">
    <property type="interactions" value="1"/>
</dbReference>
<dbReference type="FunCoup" id="O94350">
    <property type="interactions" value="604"/>
</dbReference>
<dbReference type="STRING" id="284812.O94350"/>
<dbReference type="iPTMnet" id="O94350"/>
<dbReference type="PaxDb" id="4896-SPCC11E10.01.1"/>
<dbReference type="EnsemblFungi" id="SPCC11E10.01.1">
    <property type="protein sequence ID" value="SPCC11E10.01.1:pep"/>
    <property type="gene ID" value="SPCC11E10.01"/>
</dbReference>
<dbReference type="GeneID" id="2539019"/>
<dbReference type="KEGG" id="spo:2539019"/>
<dbReference type="PomBase" id="SPCC11E10.01"/>
<dbReference type="VEuPathDB" id="FungiDB:SPCC11E10.01"/>
<dbReference type="eggNOG" id="KOG0053">
    <property type="taxonomic scope" value="Eukaryota"/>
</dbReference>
<dbReference type="HOGENOM" id="CLU_018986_2_1_1"/>
<dbReference type="InParanoid" id="O94350"/>
<dbReference type="OMA" id="NCIGATG"/>
<dbReference type="PhylomeDB" id="O94350"/>
<dbReference type="UniPathway" id="UPA00051">
    <property type="reaction ID" value="UER00078"/>
</dbReference>
<dbReference type="PRO" id="PR:O94350"/>
<dbReference type="Proteomes" id="UP000002485">
    <property type="component" value="Chromosome III"/>
</dbReference>
<dbReference type="GO" id="GO:0005737">
    <property type="term" value="C:cytoplasm"/>
    <property type="evidence" value="ECO:0000318"/>
    <property type="project" value="GO_Central"/>
</dbReference>
<dbReference type="GO" id="GO:0005634">
    <property type="term" value="C:nucleus"/>
    <property type="evidence" value="ECO:0007669"/>
    <property type="project" value="UniProtKB-SubCell"/>
</dbReference>
<dbReference type="GO" id="GO:0005777">
    <property type="term" value="C:peroxisome"/>
    <property type="evidence" value="ECO:0000250"/>
    <property type="project" value="PomBase"/>
</dbReference>
<dbReference type="GO" id="GO:0016846">
    <property type="term" value="F:carbon-sulfur lyase activity"/>
    <property type="evidence" value="ECO:0000318"/>
    <property type="project" value="GO_Central"/>
</dbReference>
<dbReference type="GO" id="GO:0047804">
    <property type="term" value="F:cysteine-S-conjugate beta-lyase activity"/>
    <property type="evidence" value="ECO:0000250"/>
    <property type="project" value="PomBase"/>
</dbReference>
<dbReference type="GO" id="GO:0030170">
    <property type="term" value="F:pyridoxal phosphate binding"/>
    <property type="evidence" value="ECO:0000318"/>
    <property type="project" value="GO_Central"/>
</dbReference>
<dbReference type="GO" id="GO:0071266">
    <property type="term" value="P:'de novo' L-methionine biosynthetic process"/>
    <property type="evidence" value="ECO:0007669"/>
    <property type="project" value="InterPro"/>
</dbReference>
<dbReference type="GO" id="GO:0019346">
    <property type="term" value="P:transsulfuration"/>
    <property type="evidence" value="ECO:0000318"/>
    <property type="project" value="GO_Central"/>
</dbReference>
<dbReference type="CDD" id="cd00614">
    <property type="entry name" value="CGS_like"/>
    <property type="match status" value="1"/>
</dbReference>
<dbReference type="FunFam" id="3.40.640.10:FF:000009">
    <property type="entry name" value="Cystathionine gamma-synthase homolog"/>
    <property type="match status" value="1"/>
</dbReference>
<dbReference type="Gene3D" id="3.90.1150.10">
    <property type="entry name" value="Aspartate Aminotransferase, domain 1"/>
    <property type="match status" value="1"/>
</dbReference>
<dbReference type="Gene3D" id="3.40.640.10">
    <property type="entry name" value="Type I PLP-dependent aspartate aminotransferase-like (Major domain)"/>
    <property type="match status" value="1"/>
</dbReference>
<dbReference type="InterPro" id="IPR000277">
    <property type="entry name" value="Cys/Met-Metab_PyrdxlP-dep_enz"/>
</dbReference>
<dbReference type="InterPro" id="IPR006238">
    <property type="entry name" value="Cys_b_lyase_euk"/>
</dbReference>
<dbReference type="InterPro" id="IPR054542">
    <property type="entry name" value="Cys_met_metab_PP"/>
</dbReference>
<dbReference type="InterPro" id="IPR015424">
    <property type="entry name" value="PyrdxlP-dep_Trfase"/>
</dbReference>
<dbReference type="InterPro" id="IPR015421">
    <property type="entry name" value="PyrdxlP-dep_Trfase_major"/>
</dbReference>
<dbReference type="InterPro" id="IPR015422">
    <property type="entry name" value="PyrdxlP-dep_Trfase_small"/>
</dbReference>
<dbReference type="NCBIfam" id="TIGR01329">
    <property type="entry name" value="cysta_beta_ly_E"/>
    <property type="match status" value="1"/>
</dbReference>
<dbReference type="PANTHER" id="PTHR11808:SF50">
    <property type="entry name" value="CYSTATHIONINE BETA-LYASE"/>
    <property type="match status" value="1"/>
</dbReference>
<dbReference type="PANTHER" id="PTHR11808">
    <property type="entry name" value="TRANS-SULFURATION ENZYME FAMILY MEMBER"/>
    <property type="match status" value="1"/>
</dbReference>
<dbReference type="Pfam" id="PF01053">
    <property type="entry name" value="Cys_Met_Meta_PP"/>
    <property type="match status" value="1"/>
</dbReference>
<dbReference type="PIRSF" id="PIRSF001434">
    <property type="entry name" value="CGS"/>
    <property type="match status" value="1"/>
</dbReference>
<dbReference type="SUPFAM" id="SSF53383">
    <property type="entry name" value="PLP-dependent transferases"/>
    <property type="match status" value="1"/>
</dbReference>
<dbReference type="PROSITE" id="PS00868">
    <property type="entry name" value="CYS_MET_METAB_PP"/>
    <property type="match status" value="1"/>
</dbReference>
<name>CBL_SCHPO</name>
<evidence type="ECO:0000250" key="1"/>
<evidence type="ECO:0000305" key="2"/>
<accession>O94350</accession>
<comment type="catalytic activity">
    <reaction>
        <text>L,L-cystathionine + H2O = L-homocysteine + pyruvate + NH4(+)</text>
        <dbReference type="Rhea" id="RHEA:13965"/>
        <dbReference type="ChEBI" id="CHEBI:15361"/>
        <dbReference type="ChEBI" id="CHEBI:15377"/>
        <dbReference type="ChEBI" id="CHEBI:28938"/>
        <dbReference type="ChEBI" id="CHEBI:58161"/>
        <dbReference type="ChEBI" id="CHEBI:58199"/>
    </reaction>
</comment>
<comment type="catalytic activity">
    <reaction>
        <text>an S-substituted L-cysteine + H2O = a thiol + pyruvate + NH4(+)</text>
        <dbReference type="Rhea" id="RHEA:18121"/>
        <dbReference type="ChEBI" id="CHEBI:15361"/>
        <dbReference type="ChEBI" id="CHEBI:15377"/>
        <dbReference type="ChEBI" id="CHEBI:28938"/>
        <dbReference type="ChEBI" id="CHEBI:29256"/>
        <dbReference type="ChEBI" id="CHEBI:58717"/>
        <dbReference type="EC" id="4.4.1.13"/>
    </reaction>
</comment>
<comment type="cofactor">
    <cofactor evidence="1">
        <name>pyridoxal 5'-phosphate</name>
        <dbReference type="ChEBI" id="CHEBI:597326"/>
    </cofactor>
</comment>
<comment type="pathway">
    <text>Amino-acid biosynthesis; L-methionine biosynthesis via de novo pathway; L-homocysteine from L-cystathionine: step 1/1.</text>
</comment>
<comment type="subcellular location">
    <subcellularLocation>
        <location evidence="1">Cytoplasm</location>
    </subcellularLocation>
    <subcellularLocation>
        <location evidence="1">Nucleus</location>
    </subcellularLocation>
</comment>
<comment type="similarity">
    <text evidence="2">Belongs to the trans-sulfuration enzymes family.</text>
</comment>
<proteinExistence type="inferred from homology"/>